<name>YACL_BACSU</name>
<proteinExistence type="evidence at transcript level"/>
<gene>
    <name type="primary">yacL</name>
    <name type="ordered locus">BSU00890</name>
</gene>
<evidence type="ECO:0000255" key="1"/>
<evidence type="ECO:0000255" key="2">
    <source>
        <dbReference type="PROSITE-ProRule" id="PRU00208"/>
    </source>
</evidence>
<evidence type="ECO:0000269" key="3">
    <source>
    </source>
</evidence>
<evidence type="ECO:0000305" key="4"/>
<organism>
    <name type="scientific">Bacillus subtilis (strain 168)</name>
    <dbReference type="NCBI Taxonomy" id="224308"/>
    <lineage>
        <taxon>Bacteria</taxon>
        <taxon>Bacillati</taxon>
        <taxon>Bacillota</taxon>
        <taxon>Bacilli</taxon>
        <taxon>Bacillales</taxon>
        <taxon>Bacillaceae</taxon>
        <taxon>Bacillus</taxon>
    </lineage>
</organism>
<keyword id="KW-0378">Hydrolase</keyword>
<keyword id="KW-0460">Magnesium</keyword>
<keyword id="KW-0479">Metal-binding</keyword>
<keyword id="KW-0540">Nuclease</keyword>
<keyword id="KW-1185">Reference proteome</keyword>
<dbReference type="EC" id="3.1.-.-"/>
<dbReference type="EMBL" id="D26185">
    <property type="protein sequence ID" value="BAA05323.1"/>
    <property type="molecule type" value="Genomic_DNA"/>
</dbReference>
<dbReference type="EMBL" id="AL009126">
    <property type="protein sequence ID" value="CAB11865.1"/>
    <property type="molecule type" value="Genomic_DNA"/>
</dbReference>
<dbReference type="EMBL" id="L14580">
    <property type="protein sequence ID" value="AAA21793.1"/>
    <property type="molecule type" value="Genomic_DNA"/>
</dbReference>
<dbReference type="PIR" id="S66118">
    <property type="entry name" value="S66118"/>
</dbReference>
<dbReference type="RefSeq" id="NP_387970.1">
    <property type="nucleotide sequence ID" value="NC_000964.3"/>
</dbReference>
<dbReference type="RefSeq" id="WP_003235014.1">
    <property type="nucleotide sequence ID" value="NZ_OZ025638.1"/>
</dbReference>
<dbReference type="SMR" id="Q06754"/>
<dbReference type="FunCoup" id="Q06754">
    <property type="interactions" value="19"/>
</dbReference>
<dbReference type="IntAct" id="Q06754">
    <property type="interactions" value="1"/>
</dbReference>
<dbReference type="STRING" id="224308.BSU00890"/>
<dbReference type="PaxDb" id="224308-BSU00890"/>
<dbReference type="EnsemblBacteria" id="CAB11865">
    <property type="protein sequence ID" value="CAB11865"/>
    <property type="gene ID" value="BSU_00890"/>
</dbReference>
<dbReference type="GeneID" id="936863"/>
<dbReference type="KEGG" id="bsu:BSU00890"/>
<dbReference type="PATRIC" id="fig|224308.179.peg.90"/>
<dbReference type="eggNOG" id="COG4956">
    <property type="taxonomic scope" value="Bacteria"/>
</dbReference>
<dbReference type="InParanoid" id="Q06754"/>
<dbReference type="OrthoDB" id="9780734at2"/>
<dbReference type="PhylomeDB" id="Q06754"/>
<dbReference type="BioCyc" id="BSUB:BSU00890-MONOMER"/>
<dbReference type="Proteomes" id="UP000001570">
    <property type="component" value="Chromosome"/>
</dbReference>
<dbReference type="GO" id="GO:0046872">
    <property type="term" value="F:metal ion binding"/>
    <property type="evidence" value="ECO:0007669"/>
    <property type="project" value="UniProtKB-KW"/>
</dbReference>
<dbReference type="GO" id="GO:0004518">
    <property type="term" value="F:nuclease activity"/>
    <property type="evidence" value="ECO:0007669"/>
    <property type="project" value="UniProtKB-KW"/>
</dbReference>
<dbReference type="CDD" id="cd09877">
    <property type="entry name" value="PIN_YacL-like"/>
    <property type="match status" value="1"/>
</dbReference>
<dbReference type="Gene3D" id="3.40.50.1010">
    <property type="entry name" value="5'-nuclease"/>
    <property type="match status" value="1"/>
</dbReference>
<dbReference type="InterPro" id="IPR052041">
    <property type="entry name" value="Nucleic_acid_metab_PIN/TRAM"/>
</dbReference>
<dbReference type="InterPro" id="IPR029060">
    <property type="entry name" value="PIN-like_dom_sf"/>
</dbReference>
<dbReference type="InterPro" id="IPR002716">
    <property type="entry name" value="PIN_dom"/>
</dbReference>
<dbReference type="InterPro" id="IPR002792">
    <property type="entry name" value="TRAM_dom"/>
</dbReference>
<dbReference type="PANTHER" id="PTHR11603">
    <property type="entry name" value="AAA FAMILY ATPASE"/>
    <property type="match status" value="1"/>
</dbReference>
<dbReference type="PANTHER" id="PTHR11603:SF147">
    <property type="entry name" value="MEMBRANE PROTEIN"/>
    <property type="match status" value="1"/>
</dbReference>
<dbReference type="Pfam" id="PF01850">
    <property type="entry name" value="PIN"/>
    <property type="match status" value="1"/>
</dbReference>
<dbReference type="SMART" id="SM00670">
    <property type="entry name" value="PINc"/>
    <property type="match status" value="1"/>
</dbReference>
<dbReference type="SUPFAM" id="SSF88723">
    <property type="entry name" value="PIN domain-like"/>
    <property type="match status" value="1"/>
</dbReference>
<dbReference type="PROSITE" id="PS50926">
    <property type="entry name" value="TRAM"/>
    <property type="match status" value="1"/>
</dbReference>
<comment type="function">
    <text evidence="4">An RNase.</text>
</comment>
<comment type="cofactor">
    <cofactor evidence="4">
        <name>Mg(2+)</name>
        <dbReference type="ChEBI" id="CHEBI:18420"/>
    </cofactor>
</comment>
<comment type="induction">
    <text evidence="3">Transcribed under partial control of SigM ECF sigma factor (PubMed:17434969).</text>
</comment>
<comment type="similarity">
    <text evidence="4">Belongs to the ycf81 family.</text>
</comment>
<comment type="similarity">
    <text evidence="4">In the central section; belongs to the PINc/VapC protein family.</text>
</comment>
<sequence>MLKRIVQAFFIIFGGVVGIFLIPELFVLLNIQDIPLITNAYTSAAIGAIIFFLISIWGTEYVVNWVKWIEDSLLKAPVPDLLFGSLGLVFGLIIAYLIVNVIPLDNIPYRIFSTIIPVFLAFFLGYLGFQVGFKKKDELISLFSISARMQKKKGTADEEHEVQDKKLKILDTSVIIDGRIADICQTGFLEGVIVIPQFVLEELQHIADSSDVLKRNRGRRGLDILNRIQKELDIEVEIYEGDFEDIQEVDSKLVKLAKLTSGVVVTNDFNLNKVCELQKVAVLNINDLANAVKPVVLPGEEMNVQVIKDGKEHNQGVAYLDDGTMIVVEEGRNYIGKHIDVLVTSVLQTAAGRMIFAKPKLLEKAL</sequence>
<accession>Q06754</accession>
<reference key="1">
    <citation type="journal article" date="1994" name="DNA Res.">
        <title>Systematic sequencing of the 180 kilobase region of the Bacillus subtilis chromosome containing the replication origin.</title>
        <authorList>
            <person name="Ogasawara N."/>
            <person name="Nakai S."/>
            <person name="Yoshikawa H."/>
        </authorList>
    </citation>
    <scope>NUCLEOTIDE SEQUENCE [GENOMIC DNA]</scope>
    <source>
        <strain>168</strain>
    </source>
</reference>
<reference key="2">
    <citation type="journal article" date="1997" name="Nature">
        <title>The complete genome sequence of the Gram-positive bacterium Bacillus subtilis.</title>
        <authorList>
            <person name="Kunst F."/>
            <person name="Ogasawara N."/>
            <person name="Moszer I."/>
            <person name="Albertini A.M."/>
            <person name="Alloni G."/>
            <person name="Azevedo V."/>
            <person name="Bertero M.G."/>
            <person name="Bessieres P."/>
            <person name="Bolotin A."/>
            <person name="Borchert S."/>
            <person name="Borriss R."/>
            <person name="Boursier L."/>
            <person name="Brans A."/>
            <person name="Braun M."/>
            <person name="Brignell S.C."/>
            <person name="Bron S."/>
            <person name="Brouillet S."/>
            <person name="Bruschi C.V."/>
            <person name="Caldwell B."/>
            <person name="Capuano V."/>
            <person name="Carter N.M."/>
            <person name="Choi S.-K."/>
            <person name="Codani J.-J."/>
            <person name="Connerton I.F."/>
            <person name="Cummings N.J."/>
            <person name="Daniel R.A."/>
            <person name="Denizot F."/>
            <person name="Devine K.M."/>
            <person name="Duesterhoeft A."/>
            <person name="Ehrlich S.D."/>
            <person name="Emmerson P.T."/>
            <person name="Entian K.-D."/>
            <person name="Errington J."/>
            <person name="Fabret C."/>
            <person name="Ferrari E."/>
            <person name="Foulger D."/>
            <person name="Fritz C."/>
            <person name="Fujita M."/>
            <person name="Fujita Y."/>
            <person name="Fuma S."/>
            <person name="Galizzi A."/>
            <person name="Galleron N."/>
            <person name="Ghim S.-Y."/>
            <person name="Glaser P."/>
            <person name="Goffeau A."/>
            <person name="Golightly E.J."/>
            <person name="Grandi G."/>
            <person name="Guiseppi G."/>
            <person name="Guy B.J."/>
            <person name="Haga K."/>
            <person name="Haiech J."/>
            <person name="Harwood C.R."/>
            <person name="Henaut A."/>
            <person name="Hilbert H."/>
            <person name="Holsappel S."/>
            <person name="Hosono S."/>
            <person name="Hullo M.-F."/>
            <person name="Itaya M."/>
            <person name="Jones L.-M."/>
            <person name="Joris B."/>
            <person name="Karamata D."/>
            <person name="Kasahara Y."/>
            <person name="Klaerr-Blanchard M."/>
            <person name="Klein C."/>
            <person name="Kobayashi Y."/>
            <person name="Koetter P."/>
            <person name="Koningstein G."/>
            <person name="Krogh S."/>
            <person name="Kumano M."/>
            <person name="Kurita K."/>
            <person name="Lapidus A."/>
            <person name="Lardinois S."/>
            <person name="Lauber J."/>
            <person name="Lazarevic V."/>
            <person name="Lee S.-M."/>
            <person name="Levine A."/>
            <person name="Liu H."/>
            <person name="Masuda S."/>
            <person name="Mauel C."/>
            <person name="Medigue C."/>
            <person name="Medina N."/>
            <person name="Mellado R.P."/>
            <person name="Mizuno M."/>
            <person name="Moestl D."/>
            <person name="Nakai S."/>
            <person name="Noback M."/>
            <person name="Noone D."/>
            <person name="O'Reilly M."/>
            <person name="Ogawa K."/>
            <person name="Ogiwara A."/>
            <person name="Oudega B."/>
            <person name="Park S.-H."/>
            <person name="Parro V."/>
            <person name="Pohl T.M."/>
            <person name="Portetelle D."/>
            <person name="Porwollik S."/>
            <person name="Prescott A.M."/>
            <person name="Presecan E."/>
            <person name="Pujic P."/>
            <person name="Purnelle B."/>
            <person name="Rapoport G."/>
            <person name="Rey M."/>
            <person name="Reynolds S."/>
            <person name="Rieger M."/>
            <person name="Rivolta C."/>
            <person name="Rocha E."/>
            <person name="Roche B."/>
            <person name="Rose M."/>
            <person name="Sadaie Y."/>
            <person name="Sato T."/>
            <person name="Scanlan E."/>
            <person name="Schleich S."/>
            <person name="Schroeter R."/>
            <person name="Scoffone F."/>
            <person name="Sekiguchi J."/>
            <person name="Sekowska A."/>
            <person name="Seror S.J."/>
            <person name="Serror P."/>
            <person name="Shin B.-S."/>
            <person name="Soldo B."/>
            <person name="Sorokin A."/>
            <person name="Tacconi E."/>
            <person name="Takagi T."/>
            <person name="Takahashi H."/>
            <person name="Takemaru K."/>
            <person name="Takeuchi M."/>
            <person name="Tamakoshi A."/>
            <person name="Tanaka T."/>
            <person name="Terpstra P."/>
            <person name="Tognoni A."/>
            <person name="Tosato V."/>
            <person name="Uchiyama S."/>
            <person name="Vandenbol M."/>
            <person name="Vannier F."/>
            <person name="Vassarotti A."/>
            <person name="Viari A."/>
            <person name="Wambutt R."/>
            <person name="Wedler E."/>
            <person name="Wedler H."/>
            <person name="Weitzenegger T."/>
            <person name="Winters P."/>
            <person name="Wipat A."/>
            <person name="Yamamoto H."/>
            <person name="Yamane K."/>
            <person name="Yasumoto K."/>
            <person name="Yata K."/>
            <person name="Yoshida K."/>
            <person name="Yoshikawa H.-F."/>
            <person name="Zumstein E."/>
            <person name="Yoshikawa H."/>
            <person name="Danchin A."/>
        </authorList>
    </citation>
    <scope>NUCLEOTIDE SEQUENCE [LARGE SCALE GENOMIC DNA]</scope>
    <source>
        <strain>168</strain>
    </source>
</reference>
<reference key="3">
    <citation type="journal article" date="1994" name="J. Biol. Chem.">
        <title>Clustering and co-transcription of the Bacillus subtilis genes encoding the aminoacyl-tRNA synthetases specific for glutamate and for cysteine and the first enzyme for cysteine biosynthesis.</title>
        <authorList>
            <person name="Gagnon Y."/>
            <person name="Breton R."/>
            <person name="Putzer H."/>
            <person name="Pelchat M."/>
            <person name="Grunberg-Manago M."/>
            <person name="Lapointe J."/>
        </authorList>
    </citation>
    <scope>NUCLEOTIDE SEQUENCE [GENOMIC DNA] OF 223-366</scope>
</reference>
<reference key="4">
    <citation type="journal article" date="2007" name="J. Bacteriol.">
        <title>SigM-responsive genes of Bacillus subtilis and their promoters.</title>
        <authorList>
            <person name="Jervis A.J."/>
            <person name="Thackray P.D."/>
            <person name="Houston C.W."/>
            <person name="Horsburgh M.J."/>
            <person name="Moir A."/>
        </authorList>
    </citation>
    <scope>INDUCTION</scope>
    <source>
        <strain>168 / 1604</strain>
    </source>
</reference>
<protein>
    <recommendedName>
        <fullName>Uncharacterized PIN and TRAM-domain containing protein YacL</fullName>
    </recommendedName>
    <alternativeName>
        <fullName>Putative RNase YacL</fullName>
        <ecNumber>3.1.-.-</ecNumber>
    </alternativeName>
</protein>
<feature type="chain" id="PRO_0000217410" description="Uncharacterized PIN and TRAM-domain containing protein YacL">
    <location>
        <begin position="1"/>
        <end position="366"/>
    </location>
</feature>
<feature type="domain" description="PINc">
    <location>
        <begin position="169"/>
        <end position="280"/>
    </location>
</feature>
<feature type="domain" description="TRAM" evidence="2">
    <location>
        <begin position="295"/>
        <end position="356"/>
    </location>
</feature>
<feature type="binding site" evidence="1">
    <location>
        <position position="250"/>
    </location>
    <ligand>
        <name>Mg(2+)</name>
        <dbReference type="ChEBI" id="CHEBI:18420"/>
    </ligand>
</feature>